<organism>
    <name type="scientific">Shewanella baltica (strain OS195)</name>
    <dbReference type="NCBI Taxonomy" id="399599"/>
    <lineage>
        <taxon>Bacteria</taxon>
        <taxon>Pseudomonadati</taxon>
        <taxon>Pseudomonadota</taxon>
        <taxon>Gammaproteobacteria</taxon>
        <taxon>Alteromonadales</taxon>
        <taxon>Shewanellaceae</taxon>
        <taxon>Shewanella</taxon>
    </lineage>
</organism>
<dbReference type="EC" id="1.6.5.-" evidence="1"/>
<dbReference type="EC" id="1.7.1.17" evidence="1"/>
<dbReference type="EMBL" id="CP000891">
    <property type="protein sequence ID" value="ABX47505.1"/>
    <property type="molecule type" value="Genomic_DNA"/>
</dbReference>
<dbReference type="RefSeq" id="WP_006079792.1">
    <property type="nucleotide sequence ID" value="NC_009997.1"/>
</dbReference>
<dbReference type="SMR" id="A9KXA9"/>
<dbReference type="GeneID" id="11770670"/>
<dbReference type="KEGG" id="sbn:Sbal195_0324"/>
<dbReference type="HOGENOM" id="CLU_088964_0_0_6"/>
<dbReference type="Proteomes" id="UP000000770">
    <property type="component" value="Chromosome"/>
</dbReference>
<dbReference type="GO" id="GO:0009055">
    <property type="term" value="F:electron transfer activity"/>
    <property type="evidence" value="ECO:0007669"/>
    <property type="project" value="UniProtKB-UniRule"/>
</dbReference>
<dbReference type="GO" id="GO:0010181">
    <property type="term" value="F:FMN binding"/>
    <property type="evidence" value="ECO:0007669"/>
    <property type="project" value="UniProtKB-UniRule"/>
</dbReference>
<dbReference type="GO" id="GO:0016652">
    <property type="term" value="F:oxidoreductase activity, acting on NAD(P)H as acceptor"/>
    <property type="evidence" value="ECO:0007669"/>
    <property type="project" value="UniProtKB-UniRule"/>
</dbReference>
<dbReference type="GO" id="GO:0016655">
    <property type="term" value="F:oxidoreductase activity, acting on NAD(P)H, quinone or similar compound as acceptor"/>
    <property type="evidence" value="ECO:0007669"/>
    <property type="project" value="InterPro"/>
</dbReference>
<dbReference type="Gene3D" id="3.40.50.360">
    <property type="match status" value="1"/>
</dbReference>
<dbReference type="HAMAP" id="MF_01216">
    <property type="entry name" value="Azoreductase_type1"/>
    <property type="match status" value="1"/>
</dbReference>
<dbReference type="InterPro" id="IPR003680">
    <property type="entry name" value="Flavodoxin_fold"/>
</dbReference>
<dbReference type="InterPro" id="IPR029039">
    <property type="entry name" value="Flavoprotein-like_sf"/>
</dbReference>
<dbReference type="InterPro" id="IPR050104">
    <property type="entry name" value="FMN-dep_NADH:Q_OxRdtase_AzoR1"/>
</dbReference>
<dbReference type="InterPro" id="IPR023048">
    <property type="entry name" value="NADH:quinone_OxRdtase_FMN_depd"/>
</dbReference>
<dbReference type="PANTHER" id="PTHR43741">
    <property type="entry name" value="FMN-DEPENDENT NADH-AZOREDUCTASE 1"/>
    <property type="match status" value="1"/>
</dbReference>
<dbReference type="PANTHER" id="PTHR43741:SF2">
    <property type="entry name" value="FMN-DEPENDENT NADH:QUINONE OXIDOREDUCTASE"/>
    <property type="match status" value="1"/>
</dbReference>
<dbReference type="Pfam" id="PF02525">
    <property type="entry name" value="Flavodoxin_2"/>
    <property type="match status" value="1"/>
</dbReference>
<dbReference type="SUPFAM" id="SSF52218">
    <property type="entry name" value="Flavoproteins"/>
    <property type="match status" value="1"/>
</dbReference>
<sequence length="198" mass="21083">MSKVLILKSSILGGYSQSAVLIDHLASHWETQGAAITVRDLGGKDVLPMVDGEIASGLRGGAELSARQQEMLALSDTLVAELKANDTIVIAAPMYNFTIPAQLKNWIDFIARAGVTFTYTETGPKGLVEGKRAVLVTTRGGAHKDGPTDHVVPYLKTVLGFIGITNVEVVYAEALNMGPEAHDKGMSEAKHSIDQLKA</sequence>
<reference key="1">
    <citation type="submission" date="2007-11" db="EMBL/GenBank/DDBJ databases">
        <title>Complete sequence of chromosome of Shewanella baltica OS195.</title>
        <authorList>
            <consortium name="US DOE Joint Genome Institute"/>
            <person name="Copeland A."/>
            <person name="Lucas S."/>
            <person name="Lapidus A."/>
            <person name="Barry K."/>
            <person name="Glavina del Rio T."/>
            <person name="Dalin E."/>
            <person name="Tice H."/>
            <person name="Pitluck S."/>
            <person name="Chain P."/>
            <person name="Malfatti S."/>
            <person name="Shin M."/>
            <person name="Vergez L."/>
            <person name="Schmutz J."/>
            <person name="Larimer F."/>
            <person name="Land M."/>
            <person name="Hauser L."/>
            <person name="Kyrpides N."/>
            <person name="Kim E."/>
            <person name="Brettar I."/>
            <person name="Rodrigues J."/>
            <person name="Konstantinidis K."/>
            <person name="Klappenbach J."/>
            <person name="Hofle M."/>
            <person name="Tiedje J."/>
            <person name="Richardson P."/>
        </authorList>
    </citation>
    <scope>NUCLEOTIDE SEQUENCE [LARGE SCALE GENOMIC DNA]</scope>
    <source>
        <strain>OS195</strain>
    </source>
</reference>
<evidence type="ECO:0000255" key="1">
    <source>
        <dbReference type="HAMAP-Rule" id="MF_01216"/>
    </source>
</evidence>
<accession>A9KXA9</accession>
<protein>
    <recommendedName>
        <fullName evidence="1">FMN-dependent NADH:quinone oxidoreductase</fullName>
        <ecNumber evidence="1">1.6.5.-</ecNumber>
    </recommendedName>
    <alternativeName>
        <fullName evidence="1">Azo-dye reductase</fullName>
    </alternativeName>
    <alternativeName>
        <fullName evidence="1">FMN-dependent NADH-azo compound oxidoreductase</fullName>
    </alternativeName>
    <alternativeName>
        <fullName evidence="1">FMN-dependent NADH-azoreductase</fullName>
        <ecNumber evidence="1">1.7.1.17</ecNumber>
    </alternativeName>
</protein>
<feature type="chain" id="PRO_1000085587" description="FMN-dependent NADH:quinone oxidoreductase">
    <location>
        <begin position="1"/>
        <end position="198"/>
    </location>
</feature>
<feature type="binding site" evidence="1">
    <location>
        <position position="10"/>
    </location>
    <ligand>
        <name>FMN</name>
        <dbReference type="ChEBI" id="CHEBI:58210"/>
    </ligand>
</feature>
<feature type="binding site" evidence="1">
    <location>
        <begin position="16"/>
        <end position="18"/>
    </location>
    <ligand>
        <name>FMN</name>
        <dbReference type="ChEBI" id="CHEBI:58210"/>
    </ligand>
</feature>
<feature type="binding site" evidence="1">
    <location>
        <begin position="94"/>
        <end position="97"/>
    </location>
    <ligand>
        <name>FMN</name>
        <dbReference type="ChEBI" id="CHEBI:58210"/>
    </ligand>
</feature>
<feature type="binding site" evidence="1">
    <location>
        <begin position="138"/>
        <end position="141"/>
    </location>
    <ligand>
        <name>FMN</name>
        <dbReference type="ChEBI" id="CHEBI:58210"/>
    </ligand>
</feature>
<gene>
    <name evidence="1" type="primary">azoR</name>
    <name type="ordered locus">Sbal195_0324</name>
</gene>
<name>AZOR_SHEB9</name>
<keyword id="KW-0285">Flavoprotein</keyword>
<keyword id="KW-0288">FMN</keyword>
<keyword id="KW-0520">NAD</keyword>
<keyword id="KW-0560">Oxidoreductase</keyword>
<comment type="function">
    <text evidence="1">Quinone reductase that provides resistance to thiol-specific stress caused by electrophilic quinones.</text>
</comment>
<comment type="function">
    <text evidence="1">Also exhibits azoreductase activity. Catalyzes the reductive cleavage of the azo bond in aromatic azo compounds to the corresponding amines.</text>
</comment>
<comment type="catalytic activity">
    <reaction evidence="1">
        <text>2 a quinone + NADH + H(+) = 2 a 1,4-benzosemiquinone + NAD(+)</text>
        <dbReference type="Rhea" id="RHEA:65952"/>
        <dbReference type="ChEBI" id="CHEBI:15378"/>
        <dbReference type="ChEBI" id="CHEBI:57540"/>
        <dbReference type="ChEBI" id="CHEBI:57945"/>
        <dbReference type="ChEBI" id="CHEBI:132124"/>
        <dbReference type="ChEBI" id="CHEBI:134225"/>
    </reaction>
</comment>
<comment type="catalytic activity">
    <reaction evidence="1">
        <text>N,N-dimethyl-1,4-phenylenediamine + anthranilate + 2 NAD(+) = 2-(4-dimethylaminophenyl)diazenylbenzoate + 2 NADH + 2 H(+)</text>
        <dbReference type="Rhea" id="RHEA:55872"/>
        <dbReference type="ChEBI" id="CHEBI:15378"/>
        <dbReference type="ChEBI" id="CHEBI:15783"/>
        <dbReference type="ChEBI" id="CHEBI:16567"/>
        <dbReference type="ChEBI" id="CHEBI:57540"/>
        <dbReference type="ChEBI" id="CHEBI:57945"/>
        <dbReference type="ChEBI" id="CHEBI:71579"/>
        <dbReference type="EC" id="1.7.1.17"/>
    </reaction>
</comment>
<comment type="cofactor">
    <cofactor evidence="1">
        <name>FMN</name>
        <dbReference type="ChEBI" id="CHEBI:58210"/>
    </cofactor>
    <text evidence="1">Binds 1 FMN per subunit.</text>
</comment>
<comment type="subunit">
    <text evidence="1">Homodimer.</text>
</comment>
<comment type="similarity">
    <text evidence="1">Belongs to the azoreductase type 1 family.</text>
</comment>
<proteinExistence type="inferred from homology"/>